<organism>
    <name type="scientific">Shouchella clausii (strain KSM-K16)</name>
    <name type="common">Alkalihalobacillus clausii</name>
    <dbReference type="NCBI Taxonomy" id="66692"/>
    <lineage>
        <taxon>Bacteria</taxon>
        <taxon>Bacillati</taxon>
        <taxon>Bacillota</taxon>
        <taxon>Bacilli</taxon>
        <taxon>Bacillales</taxon>
        <taxon>Bacillaceae</taxon>
        <taxon>Shouchella</taxon>
    </lineage>
</organism>
<protein>
    <recommendedName>
        <fullName evidence="1">L-rhamnose mutarotase</fullName>
        <ecNumber evidence="1">5.1.3.32</ecNumber>
    </recommendedName>
    <alternativeName>
        <fullName evidence="1">Rhamnose 1-epimerase</fullName>
    </alternativeName>
    <alternativeName>
        <fullName evidence="1">Type-3 mutarotase</fullName>
    </alternativeName>
</protein>
<keyword id="KW-0119">Carbohydrate metabolism</keyword>
<keyword id="KW-0963">Cytoplasm</keyword>
<keyword id="KW-0413">Isomerase</keyword>
<keyword id="KW-1185">Reference proteome</keyword>
<keyword id="KW-0684">Rhamnose metabolism</keyword>
<gene>
    <name evidence="1" type="primary">rhaM</name>
    <name type="ordered locus">ABC0376</name>
</gene>
<comment type="function">
    <text evidence="1">Involved in the anomeric conversion of L-rhamnose.</text>
</comment>
<comment type="catalytic activity">
    <reaction evidence="1">
        <text>alpha-L-rhamnose = beta-L-rhamnose</text>
        <dbReference type="Rhea" id="RHEA:25584"/>
        <dbReference type="ChEBI" id="CHEBI:27586"/>
        <dbReference type="ChEBI" id="CHEBI:27907"/>
        <dbReference type="EC" id="5.1.3.32"/>
    </reaction>
</comment>
<comment type="pathway">
    <text evidence="1">Carbohydrate metabolism; L-rhamnose metabolism.</text>
</comment>
<comment type="subunit">
    <text evidence="1">Homodimer.</text>
</comment>
<comment type="subcellular location">
    <subcellularLocation>
        <location evidence="1">Cytoplasm</location>
    </subcellularLocation>
</comment>
<comment type="similarity">
    <text evidence="1">Belongs to the rhamnose mutarotase family.</text>
</comment>
<reference key="1">
    <citation type="submission" date="2003-10" db="EMBL/GenBank/DDBJ databases">
        <title>The complete genome sequence of the alkaliphilic Bacillus clausii KSM-K16.</title>
        <authorList>
            <person name="Takaki Y."/>
            <person name="Kageyama Y."/>
            <person name="Shimamura S."/>
            <person name="Suzuki H."/>
            <person name="Nishi S."/>
            <person name="Hatada Y."/>
            <person name="Kawai S."/>
            <person name="Ito S."/>
            <person name="Horikoshi K."/>
        </authorList>
    </citation>
    <scope>NUCLEOTIDE SEQUENCE [LARGE SCALE GENOMIC DNA]</scope>
    <source>
        <strain>KSM-K16</strain>
    </source>
</reference>
<sequence length="104" mass="12395">MIRKATVMKVYKDKYDDYKQRHDKLWPEMAEMLKAHGVHHYSIFLLEETGQLFAYLLVEDEDSFSEVAKTEICQKWWAYMAPLMETNDDLSPVSHDLKEVFYLA</sequence>
<proteinExistence type="inferred from homology"/>
<feature type="chain" id="PRO_0000344551" description="L-rhamnose mutarotase">
    <location>
        <begin position="1"/>
        <end position="104"/>
    </location>
</feature>
<feature type="active site" description="Proton donor" evidence="1">
    <location>
        <position position="22"/>
    </location>
</feature>
<feature type="binding site" evidence="1">
    <location>
        <position position="18"/>
    </location>
    <ligand>
        <name>substrate</name>
    </ligand>
</feature>
<feature type="binding site" evidence="1">
    <location>
        <position position="41"/>
    </location>
    <ligand>
        <name>substrate</name>
    </ligand>
</feature>
<feature type="binding site" evidence="1">
    <location>
        <begin position="76"/>
        <end position="77"/>
    </location>
    <ligand>
        <name>substrate</name>
    </ligand>
</feature>
<evidence type="ECO:0000255" key="1">
    <source>
        <dbReference type="HAMAP-Rule" id="MF_01663"/>
    </source>
</evidence>
<accession>Q5WL37</accession>
<name>RHAM_SHOC1</name>
<dbReference type="EC" id="5.1.3.32" evidence="1"/>
<dbReference type="EMBL" id="AP006627">
    <property type="protein sequence ID" value="BAD62918.1"/>
    <property type="molecule type" value="Genomic_DNA"/>
</dbReference>
<dbReference type="RefSeq" id="WP_011245237.1">
    <property type="nucleotide sequence ID" value="NC_006582.1"/>
</dbReference>
<dbReference type="SMR" id="Q5WL37"/>
<dbReference type="STRING" id="66692.ABC0376"/>
<dbReference type="KEGG" id="bcl:ABC0376"/>
<dbReference type="eggNOG" id="COG3254">
    <property type="taxonomic scope" value="Bacteria"/>
</dbReference>
<dbReference type="HOGENOM" id="CLU_100689_2_0_9"/>
<dbReference type="OrthoDB" id="9799608at2"/>
<dbReference type="UniPathway" id="UPA00125"/>
<dbReference type="Proteomes" id="UP000001168">
    <property type="component" value="Chromosome"/>
</dbReference>
<dbReference type="GO" id="GO:0005737">
    <property type="term" value="C:cytoplasm"/>
    <property type="evidence" value="ECO:0007669"/>
    <property type="project" value="UniProtKB-SubCell"/>
</dbReference>
<dbReference type="GO" id="GO:0062192">
    <property type="term" value="F:L-rhamnose mutarotase activity"/>
    <property type="evidence" value="ECO:0007669"/>
    <property type="project" value="UniProtKB-EC"/>
</dbReference>
<dbReference type="GO" id="GO:0019301">
    <property type="term" value="P:rhamnose catabolic process"/>
    <property type="evidence" value="ECO:0007669"/>
    <property type="project" value="TreeGrafter"/>
</dbReference>
<dbReference type="Gene3D" id="3.30.70.100">
    <property type="match status" value="1"/>
</dbReference>
<dbReference type="HAMAP" id="MF_01663">
    <property type="entry name" value="L_rham_rotase"/>
    <property type="match status" value="1"/>
</dbReference>
<dbReference type="InterPro" id="IPR011008">
    <property type="entry name" value="Dimeric_a/b-barrel"/>
</dbReference>
<dbReference type="InterPro" id="IPR013448">
    <property type="entry name" value="L-rhamnose_mutarotase"/>
</dbReference>
<dbReference type="InterPro" id="IPR008000">
    <property type="entry name" value="Rham/fucose_mutarotase"/>
</dbReference>
<dbReference type="NCBIfam" id="TIGR02625">
    <property type="entry name" value="YiiL_rotase"/>
    <property type="match status" value="1"/>
</dbReference>
<dbReference type="PANTHER" id="PTHR34389">
    <property type="entry name" value="L-RHAMNOSE MUTAROTASE"/>
    <property type="match status" value="1"/>
</dbReference>
<dbReference type="PANTHER" id="PTHR34389:SF2">
    <property type="entry name" value="L-RHAMNOSE MUTAROTASE"/>
    <property type="match status" value="1"/>
</dbReference>
<dbReference type="Pfam" id="PF05336">
    <property type="entry name" value="rhaM"/>
    <property type="match status" value="1"/>
</dbReference>
<dbReference type="SUPFAM" id="SSF54909">
    <property type="entry name" value="Dimeric alpha+beta barrel"/>
    <property type="match status" value="1"/>
</dbReference>